<protein>
    <recommendedName>
        <fullName>Centrosomal protein CEP57L1</fullName>
    </recommendedName>
    <alternativeName>
        <fullName>Centrosomal protein 57kDa-like protein 1</fullName>
    </alternativeName>
    <alternativeName>
        <fullName>Centrosomal protein of 57 kDa-related protein</fullName>
        <shortName>Cep57R</shortName>
    </alternativeName>
    <alternativeName>
        <fullName>Cep57-related protein</fullName>
    </alternativeName>
</protein>
<gene>
    <name type="primary">Cep57l1</name>
    <name type="synonym">Cep57r</name>
</gene>
<comment type="function">
    <text evidence="1">Centrosomal protein which may be required for microtubule attachment to centrosomes.</text>
</comment>
<comment type="subcellular location">
    <subcellularLocation>
        <location evidence="1">Cytoplasm</location>
        <location evidence="1">Cytoskeleton</location>
        <location evidence="1">Microtubule organizing center</location>
        <location evidence="1">Centrosome</location>
    </subcellularLocation>
</comment>
<comment type="alternative products">
    <event type="alternative splicing"/>
    <isoform>
        <id>Q8VDS7-3</id>
        <name>1</name>
        <sequence type="displayed"/>
    </isoform>
    <isoform>
        <id>Q8VDS7-1</id>
        <name>2</name>
        <sequence type="described" ref="VSP_013897 VSP_013898"/>
    </isoform>
    <isoform>
        <id>Q8VDS7-2</id>
        <name>3</name>
        <sequence type="described" ref="VSP_013899 VSP_013900"/>
    </isoform>
</comment>
<comment type="similarity">
    <text evidence="6">Belongs to the translokin family.</text>
</comment>
<accession>Q8VDS7</accession>
<accession>Q9CZE0</accession>
<accession>Q9D5A1</accession>
<keyword id="KW-0025">Alternative splicing</keyword>
<keyword id="KW-0175">Coiled coil</keyword>
<keyword id="KW-0963">Cytoplasm</keyword>
<keyword id="KW-0206">Cytoskeleton</keyword>
<keyword id="KW-0493">Microtubule</keyword>
<keyword id="KW-0597">Phosphoprotein</keyword>
<keyword id="KW-1185">Reference proteome</keyword>
<feature type="chain" id="PRO_0000189535" description="Centrosomal protein CEP57L1">
    <location>
        <begin position="1"/>
        <end position="400"/>
    </location>
</feature>
<feature type="region of interest" description="Disordered" evidence="4">
    <location>
        <begin position="222"/>
        <end position="261"/>
    </location>
</feature>
<feature type="region of interest" description="Disordered" evidence="4">
    <location>
        <begin position="314"/>
        <end position="400"/>
    </location>
</feature>
<feature type="coiled-coil region" evidence="3">
    <location>
        <begin position="47"/>
        <end position="111"/>
    </location>
</feature>
<feature type="coiled-coil region" evidence="3">
    <location>
        <begin position="138"/>
        <end position="213"/>
    </location>
</feature>
<feature type="coiled-coil region" evidence="3">
    <location>
        <begin position="261"/>
        <end position="345"/>
    </location>
</feature>
<feature type="compositionally biased region" description="Polar residues" evidence="4">
    <location>
        <begin position="244"/>
        <end position="258"/>
    </location>
</feature>
<feature type="compositionally biased region" description="Basic and acidic residues" evidence="4">
    <location>
        <begin position="314"/>
        <end position="342"/>
    </location>
</feature>
<feature type="compositionally biased region" description="Basic and acidic residues" evidence="4">
    <location>
        <begin position="391"/>
        <end position="400"/>
    </location>
</feature>
<feature type="modified residue" description="Phosphoserine" evidence="2">
    <location>
        <position position="45"/>
    </location>
</feature>
<feature type="splice variant" id="VSP_013897" description="In isoform 2." evidence="5">
    <location>
        <begin position="50"/>
        <end position="125"/>
    </location>
</feature>
<feature type="splice variant" id="VSP_013898" description="In isoform 2." evidence="5">
    <original>E</original>
    <variation>ELQTGFEISKILMSTVSNSKHCKEKKKQPK</variation>
    <location>
        <position position="215"/>
    </location>
</feature>
<feature type="splice variant" id="VSP_013899" description="In isoform 3." evidence="5">
    <original>KTNCLKREPPQQRDHKFRTPTFERKKPFRTTSQARANPQSS</original>
    <variation>LQTGFEISKILMSTVSNSKHCKEKKKQPKVYYIQLIPDITS</variation>
    <location>
        <begin position="216"/>
        <end position="256"/>
    </location>
</feature>
<feature type="splice variant" id="VSP_013900" description="In isoform 3." evidence="5">
    <location>
        <begin position="257"/>
        <end position="400"/>
    </location>
</feature>
<feature type="sequence conflict" description="In Ref. 1; BAB28426." evidence="6" ref="1">
    <original>T</original>
    <variation>M</variation>
    <location>
        <position position="291"/>
    </location>
</feature>
<organism>
    <name type="scientific">Mus musculus</name>
    <name type="common">Mouse</name>
    <dbReference type="NCBI Taxonomy" id="10090"/>
    <lineage>
        <taxon>Eukaryota</taxon>
        <taxon>Metazoa</taxon>
        <taxon>Chordata</taxon>
        <taxon>Craniata</taxon>
        <taxon>Vertebrata</taxon>
        <taxon>Euteleostomi</taxon>
        <taxon>Mammalia</taxon>
        <taxon>Eutheria</taxon>
        <taxon>Euarchontoglires</taxon>
        <taxon>Glires</taxon>
        <taxon>Rodentia</taxon>
        <taxon>Myomorpha</taxon>
        <taxon>Muroidea</taxon>
        <taxon>Muridae</taxon>
        <taxon>Murinae</taxon>
        <taxon>Mus</taxon>
        <taxon>Mus</taxon>
    </lineage>
</organism>
<name>CE57L_MOUSE</name>
<reference key="1">
    <citation type="journal article" date="2005" name="Science">
        <title>The transcriptional landscape of the mammalian genome.</title>
        <authorList>
            <person name="Carninci P."/>
            <person name="Kasukawa T."/>
            <person name="Katayama S."/>
            <person name="Gough J."/>
            <person name="Frith M.C."/>
            <person name="Maeda N."/>
            <person name="Oyama R."/>
            <person name="Ravasi T."/>
            <person name="Lenhard B."/>
            <person name="Wells C."/>
            <person name="Kodzius R."/>
            <person name="Shimokawa K."/>
            <person name="Bajic V.B."/>
            <person name="Brenner S.E."/>
            <person name="Batalov S."/>
            <person name="Forrest A.R."/>
            <person name="Zavolan M."/>
            <person name="Davis M.J."/>
            <person name="Wilming L.G."/>
            <person name="Aidinis V."/>
            <person name="Allen J.E."/>
            <person name="Ambesi-Impiombato A."/>
            <person name="Apweiler R."/>
            <person name="Aturaliya R.N."/>
            <person name="Bailey T.L."/>
            <person name="Bansal M."/>
            <person name="Baxter L."/>
            <person name="Beisel K.W."/>
            <person name="Bersano T."/>
            <person name="Bono H."/>
            <person name="Chalk A.M."/>
            <person name="Chiu K.P."/>
            <person name="Choudhary V."/>
            <person name="Christoffels A."/>
            <person name="Clutterbuck D.R."/>
            <person name="Crowe M.L."/>
            <person name="Dalla E."/>
            <person name="Dalrymple B.P."/>
            <person name="de Bono B."/>
            <person name="Della Gatta G."/>
            <person name="di Bernardo D."/>
            <person name="Down T."/>
            <person name="Engstrom P."/>
            <person name="Fagiolini M."/>
            <person name="Faulkner G."/>
            <person name="Fletcher C.F."/>
            <person name="Fukushima T."/>
            <person name="Furuno M."/>
            <person name="Futaki S."/>
            <person name="Gariboldi M."/>
            <person name="Georgii-Hemming P."/>
            <person name="Gingeras T.R."/>
            <person name="Gojobori T."/>
            <person name="Green R.E."/>
            <person name="Gustincich S."/>
            <person name="Harbers M."/>
            <person name="Hayashi Y."/>
            <person name="Hensch T.K."/>
            <person name="Hirokawa N."/>
            <person name="Hill D."/>
            <person name="Huminiecki L."/>
            <person name="Iacono M."/>
            <person name="Ikeo K."/>
            <person name="Iwama A."/>
            <person name="Ishikawa T."/>
            <person name="Jakt M."/>
            <person name="Kanapin A."/>
            <person name="Katoh M."/>
            <person name="Kawasawa Y."/>
            <person name="Kelso J."/>
            <person name="Kitamura H."/>
            <person name="Kitano H."/>
            <person name="Kollias G."/>
            <person name="Krishnan S.P."/>
            <person name="Kruger A."/>
            <person name="Kummerfeld S.K."/>
            <person name="Kurochkin I.V."/>
            <person name="Lareau L.F."/>
            <person name="Lazarevic D."/>
            <person name="Lipovich L."/>
            <person name="Liu J."/>
            <person name="Liuni S."/>
            <person name="McWilliam S."/>
            <person name="Madan Babu M."/>
            <person name="Madera M."/>
            <person name="Marchionni L."/>
            <person name="Matsuda H."/>
            <person name="Matsuzawa S."/>
            <person name="Miki H."/>
            <person name="Mignone F."/>
            <person name="Miyake S."/>
            <person name="Morris K."/>
            <person name="Mottagui-Tabar S."/>
            <person name="Mulder N."/>
            <person name="Nakano N."/>
            <person name="Nakauchi H."/>
            <person name="Ng P."/>
            <person name="Nilsson R."/>
            <person name="Nishiguchi S."/>
            <person name="Nishikawa S."/>
            <person name="Nori F."/>
            <person name="Ohara O."/>
            <person name="Okazaki Y."/>
            <person name="Orlando V."/>
            <person name="Pang K.C."/>
            <person name="Pavan W.J."/>
            <person name="Pavesi G."/>
            <person name="Pesole G."/>
            <person name="Petrovsky N."/>
            <person name="Piazza S."/>
            <person name="Reed J."/>
            <person name="Reid J.F."/>
            <person name="Ring B.Z."/>
            <person name="Ringwald M."/>
            <person name="Rost B."/>
            <person name="Ruan Y."/>
            <person name="Salzberg S.L."/>
            <person name="Sandelin A."/>
            <person name="Schneider C."/>
            <person name="Schoenbach C."/>
            <person name="Sekiguchi K."/>
            <person name="Semple C.A."/>
            <person name="Seno S."/>
            <person name="Sessa L."/>
            <person name="Sheng Y."/>
            <person name="Shibata Y."/>
            <person name="Shimada H."/>
            <person name="Shimada K."/>
            <person name="Silva D."/>
            <person name="Sinclair B."/>
            <person name="Sperling S."/>
            <person name="Stupka E."/>
            <person name="Sugiura K."/>
            <person name="Sultana R."/>
            <person name="Takenaka Y."/>
            <person name="Taki K."/>
            <person name="Tammoja K."/>
            <person name="Tan S.L."/>
            <person name="Tang S."/>
            <person name="Taylor M.S."/>
            <person name="Tegner J."/>
            <person name="Teichmann S.A."/>
            <person name="Ueda H.R."/>
            <person name="van Nimwegen E."/>
            <person name="Verardo R."/>
            <person name="Wei C.L."/>
            <person name="Yagi K."/>
            <person name="Yamanishi H."/>
            <person name="Zabarovsky E."/>
            <person name="Zhu S."/>
            <person name="Zimmer A."/>
            <person name="Hide W."/>
            <person name="Bult C."/>
            <person name="Grimmond S.M."/>
            <person name="Teasdale R.D."/>
            <person name="Liu E.T."/>
            <person name="Brusic V."/>
            <person name="Quackenbush J."/>
            <person name="Wahlestedt C."/>
            <person name="Mattick J.S."/>
            <person name="Hume D.A."/>
            <person name="Kai C."/>
            <person name="Sasaki D."/>
            <person name="Tomaru Y."/>
            <person name="Fukuda S."/>
            <person name="Kanamori-Katayama M."/>
            <person name="Suzuki M."/>
            <person name="Aoki J."/>
            <person name="Arakawa T."/>
            <person name="Iida J."/>
            <person name="Imamura K."/>
            <person name="Itoh M."/>
            <person name="Kato T."/>
            <person name="Kawaji H."/>
            <person name="Kawagashira N."/>
            <person name="Kawashima T."/>
            <person name="Kojima M."/>
            <person name="Kondo S."/>
            <person name="Konno H."/>
            <person name="Nakano K."/>
            <person name="Ninomiya N."/>
            <person name="Nishio T."/>
            <person name="Okada M."/>
            <person name="Plessy C."/>
            <person name="Shibata K."/>
            <person name="Shiraki T."/>
            <person name="Suzuki S."/>
            <person name="Tagami M."/>
            <person name="Waki K."/>
            <person name="Watahiki A."/>
            <person name="Okamura-Oho Y."/>
            <person name="Suzuki H."/>
            <person name="Kawai J."/>
            <person name="Hayashizaki Y."/>
        </authorList>
    </citation>
    <scope>NUCLEOTIDE SEQUENCE [LARGE SCALE MRNA] (ISOFORMS 2 AND 3)</scope>
    <source>
        <strain>C57BL/6J</strain>
        <tissue>Embryo</tissue>
        <tissue>Testis</tissue>
    </source>
</reference>
<reference key="2">
    <citation type="journal article" date="2004" name="Genome Res.">
        <title>The status, quality, and expansion of the NIH full-length cDNA project: the Mammalian Gene Collection (MGC).</title>
        <authorList>
            <consortium name="The MGC Project Team"/>
        </authorList>
    </citation>
    <scope>NUCLEOTIDE SEQUENCE [LARGE SCALE MRNA] (ISOFORM 1)</scope>
    <source>
        <strain>Czech II</strain>
        <tissue>Mammary tumor</tissue>
    </source>
</reference>
<sequence>MDSELSQSMVGSYLNPPERMHLPSFTQNEAFQNCHPGTPPKMFNSPNNQALVSALKTLQEKIRRLELERTQAEDNLNLLSREAAQYKKALEEETNERNLAHQELIKQKKDISIQLSSAQSRCILLEKQLEYTKRMVLNVEREKTMILEQQAQLQREKEQDQMKLHAKLEKLHVLEKECLRLTATRQTAEDKIKCLEEKLKEEEHQRRLFQDRACEKTNCLKREPPQQRDHKFRTPTFERKKPFRTTSQARANPQSSGEPVSICDSLSELLMTMEEELDQMNMEHRELLRQTMQPGNHSVSEDIEQELEQLAKKMESKGDQISKLKKHQDSVRKLQEKIENSRINESSGIHGNPKGSKNLKTSPRKCVSETSSFQRDRGFQPVQVHSLQSKLRRDDIKWEQ</sequence>
<evidence type="ECO:0000250" key="1"/>
<evidence type="ECO:0000250" key="2">
    <source>
        <dbReference type="UniProtKB" id="Q8IYX8"/>
    </source>
</evidence>
<evidence type="ECO:0000255" key="3"/>
<evidence type="ECO:0000256" key="4">
    <source>
        <dbReference type="SAM" id="MobiDB-lite"/>
    </source>
</evidence>
<evidence type="ECO:0000303" key="5">
    <source>
    </source>
</evidence>
<evidence type="ECO:0000305" key="6"/>
<dbReference type="EMBL" id="AK012710">
    <property type="protein sequence ID" value="BAB28426.1"/>
    <property type="molecule type" value="mRNA"/>
</dbReference>
<dbReference type="EMBL" id="AK015619">
    <property type="protein sequence ID" value="BAB29907.1"/>
    <property type="molecule type" value="mRNA"/>
</dbReference>
<dbReference type="EMBL" id="BC021375">
    <property type="protein sequence ID" value="AAH21375.1"/>
    <property type="molecule type" value="mRNA"/>
</dbReference>
<dbReference type="CCDS" id="CCDS23808.1">
    <molecule id="Q8VDS7-3"/>
</dbReference>
<dbReference type="RefSeq" id="NP_001230003.1">
    <property type="nucleotide sequence ID" value="NM_001243074.1"/>
</dbReference>
<dbReference type="RefSeq" id="NP_001230004.1">
    <property type="nucleotide sequence ID" value="NM_001243075.1"/>
</dbReference>
<dbReference type="SMR" id="Q8VDS7"/>
<dbReference type="BioGRID" id="222050">
    <property type="interactions" value="6"/>
</dbReference>
<dbReference type="FunCoup" id="Q8VDS7">
    <property type="interactions" value="361"/>
</dbReference>
<dbReference type="STRING" id="10090.ENSMUSP00000139509"/>
<dbReference type="PhosphoSitePlus" id="Q8VDS7"/>
<dbReference type="ProteomicsDB" id="281450">
    <molecule id="Q8VDS7-3"/>
</dbReference>
<dbReference type="ProteomicsDB" id="281451">
    <molecule id="Q8VDS7-1"/>
</dbReference>
<dbReference type="ProteomicsDB" id="281452">
    <molecule id="Q8VDS7-2"/>
</dbReference>
<dbReference type="GeneID" id="103268"/>
<dbReference type="KEGG" id="mmu:103268"/>
<dbReference type="UCSC" id="uc007eya.2">
    <molecule id="Q8VDS7-1"/>
    <property type="organism name" value="mouse"/>
</dbReference>
<dbReference type="AGR" id="MGI:1915511"/>
<dbReference type="CTD" id="285753"/>
<dbReference type="MGI" id="MGI:1915511">
    <property type="gene designation" value="Cep57l1"/>
</dbReference>
<dbReference type="eggNOG" id="ENOG502QTVF">
    <property type="taxonomic scope" value="Eukaryota"/>
</dbReference>
<dbReference type="InParanoid" id="Q8VDS7"/>
<dbReference type="OrthoDB" id="76453at2759"/>
<dbReference type="PhylomeDB" id="Q8VDS7"/>
<dbReference type="BioGRID-ORCS" id="103268">
    <property type="hits" value="3 hits in 77 CRISPR screens"/>
</dbReference>
<dbReference type="ChiTaRS" id="Cep57l1">
    <property type="organism name" value="mouse"/>
</dbReference>
<dbReference type="PRO" id="PR:Q8VDS7"/>
<dbReference type="Proteomes" id="UP000000589">
    <property type="component" value="Unplaced"/>
</dbReference>
<dbReference type="RNAct" id="Q8VDS7">
    <property type="molecule type" value="protein"/>
</dbReference>
<dbReference type="GO" id="GO:0005813">
    <property type="term" value="C:centrosome"/>
    <property type="evidence" value="ECO:0007669"/>
    <property type="project" value="UniProtKB-SubCell"/>
</dbReference>
<dbReference type="GO" id="GO:0005737">
    <property type="term" value="C:cytoplasm"/>
    <property type="evidence" value="ECO:0007669"/>
    <property type="project" value="UniProtKB-KW"/>
</dbReference>
<dbReference type="GO" id="GO:0005874">
    <property type="term" value="C:microtubule"/>
    <property type="evidence" value="ECO:0007669"/>
    <property type="project" value="UniProtKB-KW"/>
</dbReference>
<dbReference type="GO" id="GO:0043015">
    <property type="term" value="F:gamma-tubulin binding"/>
    <property type="evidence" value="ECO:0007669"/>
    <property type="project" value="InterPro"/>
</dbReference>
<dbReference type="GO" id="GO:0042802">
    <property type="term" value="F:identical protein binding"/>
    <property type="evidence" value="ECO:0007669"/>
    <property type="project" value="InterPro"/>
</dbReference>
<dbReference type="GO" id="GO:0008017">
    <property type="term" value="F:microtubule binding"/>
    <property type="evidence" value="ECO:0007669"/>
    <property type="project" value="InterPro"/>
</dbReference>
<dbReference type="FunFam" id="1.20.58.90:FF:000005">
    <property type="entry name" value="centrosomal protein CEP57L1 isoform X2"/>
    <property type="match status" value="1"/>
</dbReference>
<dbReference type="Gene3D" id="1.20.58.90">
    <property type="match status" value="1"/>
</dbReference>
<dbReference type="InterPro" id="IPR051756">
    <property type="entry name" value="Centrosomal_MT-associated"/>
</dbReference>
<dbReference type="InterPro" id="IPR025913">
    <property type="entry name" value="Cep57_CLD"/>
</dbReference>
<dbReference type="InterPro" id="IPR024957">
    <property type="entry name" value="Cep57_MT-bd_dom"/>
</dbReference>
<dbReference type="PANTHER" id="PTHR19336:SF10">
    <property type="entry name" value="CENTROSOMAL PROTEIN CEP57L1"/>
    <property type="match status" value="1"/>
</dbReference>
<dbReference type="PANTHER" id="PTHR19336">
    <property type="entry name" value="UNCHARACTERIZED DUF1167"/>
    <property type="match status" value="1"/>
</dbReference>
<dbReference type="Pfam" id="PF14073">
    <property type="entry name" value="Cep57_CLD"/>
    <property type="match status" value="1"/>
</dbReference>
<dbReference type="Pfam" id="PF06657">
    <property type="entry name" value="Cep57_MT_bd"/>
    <property type="match status" value="1"/>
</dbReference>
<proteinExistence type="evidence at transcript level"/>